<comment type="function">
    <text evidence="2 4">Binds double-stranded DNA tightly but without sequence specificity (PubMed:12730210). Involved in DNA compaction (By similarity).</text>
</comment>
<comment type="subunit">
    <text evidence="2 4">Forms homodimers and homotetramers (PubMed:12730210). Interacts with Alba 1 (By similarity).</text>
</comment>
<comment type="subcellular location">
    <subcellularLocation>
        <location evidence="1 3">Cytoplasm</location>
    </subcellularLocation>
    <subcellularLocation>
        <location evidence="1 3">Chromosome</location>
    </subcellularLocation>
</comment>
<comment type="similarity">
    <text evidence="3 5">Belongs to the histone-like Alba family.</text>
</comment>
<dbReference type="EMBL" id="AE000782">
    <property type="protein sequence ID" value="AAB89299.1"/>
    <property type="molecule type" value="Genomic_DNA"/>
</dbReference>
<dbReference type="PIR" id="C69494">
    <property type="entry name" value="C69494"/>
</dbReference>
<dbReference type="PDB" id="1NFH">
    <property type="method" value="X-ray"/>
    <property type="resolution" value="2.65 A"/>
    <property type="chains" value="A/B=1-89"/>
</dbReference>
<dbReference type="PDB" id="1NFJ">
    <property type="method" value="X-ray"/>
    <property type="resolution" value="2.00 A"/>
    <property type="chains" value="A=1-89"/>
</dbReference>
<dbReference type="PDBsum" id="1NFH"/>
<dbReference type="PDBsum" id="1NFJ"/>
<dbReference type="SMR" id="O28323"/>
<dbReference type="STRING" id="224325.AF_1956"/>
<dbReference type="PaxDb" id="224325-AF_1956"/>
<dbReference type="EnsemblBacteria" id="AAB89299">
    <property type="protein sequence ID" value="AAB89299"/>
    <property type="gene ID" value="AF_1956"/>
</dbReference>
<dbReference type="KEGG" id="afu:AF_1956"/>
<dbReference type="eggNOG" id="arCOG01753">
    <property type="taxonomic scope" value="Archaea"/>
</dbReference>
<dbReference type="HOGENOM" id="CLU_110989_1_0_2"/>
<dbReference type="OrthoDB" id="10360at2157"/>
<dbReference type="PhylomeDB" id="O28323"/>
<dbReference type="EvolutionaryTrace" id="O28323"/>
<dbReference type="Proteomes" id="UP000002199">
    <property type="component" value="Chromosome"/>
</dbReference>
<dbReference type="GO" id="GO:0005694">
    <property type="term" value="C:chromosome"/>
    <property type="evidence" value="ECO:0007669"/>
    <property type="project" value="UniProtKB-SubCell"/>
</dbReference>
<dbReference type="GO" id="GO:0005737">
    <property type="term" value="C:cytoplasm"/>
    <property type="evidence" value="ECO:0007669"/>
    <property type="project" value="UniProtKB-SubCell"/>
</dbReference>
<dbReference type="GO" id="GO:0003690">
    <property type="term" value="F:double-stranded DNA binding"/>
    <property type="evidence" value="ECO:0007669"/>
    <property type="project" value="UniProtKB-UniRule"/>
</dbReference>
<dbReference type="GO" id="GO:0003723">
    <property type="term" value="F:RNA binding"/>
    <property type="evidence" value="ECO:0007669"/>
    <property type="project" value="InterPro"/>
</dbReference>
<dbReference type="GO" id="GO:0030261">
    <property type="term" value="P:chromosome condensation"/>
    <property type="evidence" value="ECO:0007669"/>
    <property type="project" value="UniProtKB-KW"/>
</dbReference>
<dbReference type="Gene3D" id="3.30.110.20">
    <property type="entry name" value="Alba-like domain"/>
    <property type="match status" value="1"/>
</dbReference>
<dbReference type="HAMAP" id="MF_01122">
    <property type="entry name" value="AlbA"/>
    <property type="match status" value="1"/>
</dbReference>
<dbReference type="InterPro" id="IPR036882">
    <property type="entry name" value="Alba-like_dom_sf"/>
</dbReference>
<dbReference type="InterPro" id="IPR013795">
    <property type="entry name" value="DNA/RNA-bd_Alba"/>
</dbReference>
<dbReference type="InterPro" id="IPR002775">
    <property type="entry name" value="DNA/RNA-bd_Alba-like"/>
</dbReference>
<dbReference type="NCBIfam" id="TIGR00285">
    <property type="entry name" value="DNA-binding protein Alba"/>
    <property type="match status" value="1"/>
</dbReference>
<dbReference type="NCBIfam" id="NF003088">
    <property type="entry name" value="PRK04015.1"/>
    <property type="match status" value="1"/>
</dbReference>
<dbReference type="Pfam" id="PF01918">
    <property type="entry name" value="Alba"/>
    <property type="match status" value="1"/>
</dbReference>
<dbReference type="PIRSF" id="PIRSF028732">
    <property type="entry name" value="Alba"/>
    <property type="match status" value="1"/>
</dbReference>
<dbReference type="SUPFAM" id="SSF82704">
    <property type="entry name" value="AlbA-like"/>
    <property type="match status" value="1"/>
</dbReference>
<accession>O28323</accession>
<proteinExistence type="evidence at protein level"/>
<organism>
    <name type="scientific">Archaeoglobus fulgidus (strain ATCC 49558 / DSM 4304 / JCM 9628 / NBRC 100126 / VC-16)</name>
    <dbReference type="NCBI Taxonomy" id="224325"/>
    <lineage>
        <taxon>Archaea</taxon>
        <taxon>Methanobacteriati</taxon>
        <taxon>Methanobacteriota</taxon>
        <taxon>Archaeoglobi</taxon>
        <taxon>Archaeoglobales</taxon>
        <taxon>Archaeoglobaceae</taxon>
        <taxon>Archaeoglobus</taxon>
    </lineage>
</organism>
<gene>
    <name evidence="3" type="primary">albA2</name>
    <name type="ordered locus">AF_1956</name>
</gene>
<sequence length="89" mass="9894">MAEHVVYVGNKPVMNYVLATLTQLNEGADEVVIKARGRAISRAVDVAEIVRNRFMPGVKVKEIKIDTEELESEQGRRSNVSTIEIVLAK</sequence>
<protein>
    <recommendedName>
        <fullName evidence="3">DNA/RNA-binding protein Alba 2</fullName>
    </recommendedName>
    <alternativeName>
        <fullName>Af1</fullName>
    </alternativeName>
</protein>
<name>ALBA2_ARCFU</name>
<evidence type="ECO:0000250" key="1">
    <source>
        <dbReference type="UniProtKB" id="P60849"/>
    </source>
</evidence>
<evidence type="ECO:0000250" key="2">
    <source>
        <dbReference type="UniProtKB" id="Q97ZF4"/>
    </source>
</evidence>
<evidence type="ECO:0000255" key="3">
    <source>
        <dbReference type="HAMAP-Rule" id="MF_01122"/>
    </source>
</evidence>
<evidence type="ECO:0000269" key="4">
    <source>
    </source>
</evidence>
<evidence type="ECO:0000305" key="5"/>
<evidence type="ECO:0007744" key="6">
    <source>
        <dbReference type="PDB" id="1NFH"/>
    </source>
</evidence>
<evidence type="ECO:0007744" key="7">
    <source>
        <dbReference type="PDB" id="1NFJ"/>
    </source>
</evidence>
<evidence type="ECO:0007829" key="8">
    <source>
        <dbReference type="PDB" id="1NFJ"/>
    </source>
</evidence>
<keyword id="KW-0002">3D-structure</keyword>
<keyword id="KW-0158">Chromosome</keyword>
<keyword id="KW-0963">Cytoplasm</keyword>
<keyword id="KW-0226">DNA condensation</keyword>
<keyword id="KW-0238">DNA-binding</keyword>
<keyword id="KW-1185">Reference proteome</keyword>
<reference key="1">
    <citation type="journal article" date="1997" name="Nature">
        <title>The complete genome sequence of the hyperthermophilic, sulphate-reducing archaeon Archaeoglobus fulgidus.</title>
        <authorList>
            <person name="Klenk H.-P."/>
            <person name="Clayton R.A."/>
            <person name="Tomb J.-F."/>
            <person name="White O."/>
            <person name="Nelson K.E."/>
            <person name="Ketchum K.A."/>
            <person name="Dodson R.J."/>
            <person name="Gwinn M.L."/>
            <person name="Hickey E.K."/>
            <person name="Peterson J.D."/>
            <person name="Richardson D.L."/>
            <person name="Kerlavage A.R."/>
            <person name="Graham D.E."/>
            <person name="Kyrpides N.C."/>
            <person name="Fleischmann R.D."/>
            <person name="Quackenbush J."/>
            <person name="Lee N.H."/>
            <person name="Sutton G.G."/>
            <person name="Gill S.R."/>
            <person name="Kirkness E.F."/>
            <person name="Dougherty B.A."/>
            <person name="McKenney K."/>
            <person name="Adams M.D."/>
            <person name="Loftus B.J."/>
            <person name="Peterson S.N."/>
            <person name="Reich C.I."/>
            <person name="McNeil L.K."/>
            <person name="Badger J.H."/>
            <person name="Glodek A."/>
            <person name="Zhou L."/>
            <person name="Overbeek R."/>
            <person name="Gocayne J.D."/>
            <person name="Weidman J.F."/>
            <person name="McDonald L.A."/>
            <person name="Utterback T.R."/>
            <person name="Cotton M.D."/>
            <person name="Spriggs T."/>
            <person name="Artiach P."/>
            <person name="Kaine B.P."/>
            <person name="Sykes S.M."/>
            <person name="Sadow P.W."/>
            <person name="D'Andrea K.P."/>
            <person name="Bowman C."/>
            <person name="Fujii C."/>
            <person name="Garland S.A."/>
            <person name="Mason T.M."/>
            <person name="Olsen G.J."/>
            <person name="Fraser C.M."/>
            <person name="Smith H.O."/>
            <person name="Woese C.R."/>
            <person name="Venter J.C."/>
        </authorList>
    </citation>
    <scope>NUCLEOTIDE SEQUENCE [LARGE SCALE GENOMIC DNA]</scope>
    <source>
        <strain>ATCC 49558 / DSM 4304 / JCM 9628 / NBRC 100126 / VC-16</strain>
    </source>
</reference>
<reference evidence="6 7" key="2">
    <citation type="journal article" date="2003" name="J. Biol. Chem.">
        <title>Structure of a Sir2 substrate, Alba, reveals a mechanism for deacetylation-induced enhancement of DNA binding.</title>
        <authorList>
            <person name="Zhao K."/>
            <person name="Chai X."/>
            <person name="Marmorstein R."/>
        </authorList>
    </citation>
    <scope>X-RAY CRYSTALLOGRAPHY (2.0 ANGSTROMS)</scope>
    <scope>FUNCTION</scope>
    <scope>SUBUNIT</scope>
    <scope>MUTAGENESIS OF ASN-10; LYS-11; LEU-18 AND PHE-54</scope>
</reference>
<feature type="chain" id="PRO_0000151697" description="DNA/RNA-binding protein Alba 2">
    <location>
        <begin position="1"/>
        <end position="89"/>
    </location>
</feature>
<feature type="mutagenesis site" description="Slight decrease in ability to bind DNA." evidence="4">
    <original>N</original>
    <variation>A</variation>
    <location>
        <position position="10"/>
    </location>
</feature>
<feature type="mutagenesis site" description="Less stable tetramers; decreased ability to bind DNA." evidence="4">
    <original>K</original>
    <variation>R</variation>
    <variation>Q</variation>
    <variation>M</variation>
    <location>
        <position position="11"/>
    </location>
</feature>
<feature type="mutagenesis site" description="Less stable tetramers; decreased ability to bind DNA." evidence="4">
    <original>L</original>
    <variation>R</variation>
    <location>
        <position position="18"/>
    </location>
</feature>
<feature type="mutagenesis site" description="Less stable tetramers; decreased ability to bind DNA." evidence="4">
    <original>F</original>
    <variation>R</variation>
    <location>
        <position position="54"/>
    </location>
</feature>
<feature type="strand" evidence="8">
    <location>
        <begin position="4"/>
        <end position="7"/>
    </location>
</feature>
<feature type="helix" evidence="8">
    <location>
        <begin position="13"/>
        <end position="25"/>
    </location>
</feature>
<feature type="strand" evidence="8">
    <location>
        <begin position="29"/>
        <end position="36"/>
    </location>
</feature>
<feature type="helix" evidence="8">
    <location>
        <begin position="39"/>
        <end position="53"/>
    </location>
</feature>
<feature type="strand" evidence="8">
    <location>
        <begin position="59"/>
        <end position="69"/>
    </location>
</feature>
<feature type="strand" evidence="8">
    <location>
        <begin position="79"/>
        <end position="88"/>
    </location>
</feature>